<evidence type="ECO:0000255" key="1">
    <source>
        <dbReference type="PROSITE-ProRule" id="PRU00267"/>
    </source>
</evidence>
<evidence type="ECO:0000256" key="2">
    <source>
        <dbReference type="SAM" id="MobiDB-lite"/>
    </source>
</evidence>
<evidence type="ECO:0000269" key="3">
    <source>
    </source>
</evidence>
<evidence type="ECO:0000269" key="4">
    <source>
    </source>
</evidence>
<evidence type="ECO:0000305" key="5"/>
<keyword id="KW-0010">Activator</keyword>
<keyword id="KW-0963">Cytoplasm</keyword>
<keyword id="KW-0238">DNA-binding</keyword>
<keyword id="KW-0539">Nucleus</keyword>
<keyword id="KW-0597">Phosphoprotein</keyword>
<keyword id="KW-1185">Reference proteome</keyword>
<keyword id="KW-0346">Stress response</keyword>
<keyword id="KW-0804">Transcription</keyword>
<keyword id="KW-0805">Transcription regulation</keyword>
<name>STE11_SCHPO</name>
<sequence>MSASLTAEQKDQKSSVKRPLNSFMLYRRDRQAEIPTSNHQSISRIIGQLWRNESAQVKKYYSDLSALERQKHMLENPEYKYTPKKRSTVRRRHKKVSPSSGSFVASDYVVLQQIAQSSKTLKQTEPEKPVNEEETLAALLAPALSYPKSGKSNLIETSELSCLSSSPMIRSHTIPSLSFTDQVSTTISTLDKSEQAPSSLGIYYRSPSSGSPIGRTKSVCLANKARIVPKRSMSSDGCVDKSYQMSKTPSLEANLPQNSSNCSARRVPKFDSKGTVSEQSNSDSPELSADKVLSHCSPIDARPSTPSCPNASISPKTPNTGDHYGFDGAEYLGTPLSVGSTTAYLYGQETELLSTPYCHTSYPAMSRLNSSSGYTCVSSSSVTNSGHTENNTWRSDEQSKGFVDINSFSQSLFSNGNYEFAAHSQELDDLFSQITDFTSTDPIASSLKDANSLGPSLLEPWLPNSNLF</sequence>
<proteinExistence type="evidence at protein level"/>
<accession>P36631</accession>
<accession>O59696</accession>
<accession>Q9UU71</accession>
<dbReference type="EMBL" id="Z11156">
    <property type="protein sequence ID" value="CAA77507.1"/>
    <property type="molecule type" value="Genomic_DNA"/>
</dbReference>
<dbReference type="EMBL" id="CU329671">
    <property type="protein sequence ID" value="CAA18162.1"/>
    <property type="molecule type" value="Genomic_DNA"/>
</dbReference>
<dbReference type="EMBL" id="AB027776">
    <property type="protein sequence ID" value="BAA87080.1"/>
    <property type="molecule type" value="Genomic_DNA"/>
</dbReference>
<dbReference type="PIR" id="A41518">
    <property type="entry name" value="A41518"/>
</dbReference>
<dbReference type="PIR" id="T40223">
    <property type="entry name" value="T40223"/>
</dbReference>
<dbReference type="RefSeq" id="NP_596656.1">
    <property type="nucleotide sequence ID" value="NM_001022578.2"/>
</dbReference>
<dbReference type="SMR" id="P36631"/>
<dbReference type="BioGRID" id="276789">
    <property type="interactions" value="31"/>
</dbReference>
<dbReference type="FunCoup" id="P36631">
    <property type="interactions" value="275"/>
</dbReference>
<dbReference type="STRING" id="284812.P36631"/>
<dbReference type="iPTMnet" id="P36631"/>
<dbReference type="PaxDb" id="4896-SPBC32C12.02.1"/>
<dbReference type="EnsemblFungi" id="SPBC32C12.02.1">
    <property type="protein sequence ID" value="SPBC32C12.02.1:pep"/>
    <property type="gene ID" value="SPBC32C12.02"/>
</dbReference>
<dbReference type="GeneID" id="2540258"/>
<dbReference type="KEGG" id="spo:2540258"/>
<dbReference type="PomBase" id="SPBC32C12.02">
    <property type="gene designation" value="ste11"/>
</dbReference>
<dbReference type="VEuPathDB" id="FungiDB:SPBC32C12.02"/>
<dbReference type="eggNOG" id="KOG0528">
    <property type="taxonomic scope" value="Eukaryota"/>
</dbReference>
<dbReference type="HOGENOM" id="CLU_577655_0_0_1"/>
<dbReference type="InParanoid" id="P36631"/>
<dbReference type="OMA" id="NSGHTEN"/>
<dbReference type="PhylomeDB" id="P36631"/>
<dbReference type="Reactome" id="R-SPO-9856649">
    <property type="pathway name" value="Transcriptional and post-translational regulation of MITF-M expression and activity"/>
</dbReference>
<dbReference type="PRO" id="PR:P36631"/>
<dbReference type="Proteomes" id="UP000002485">
    <property type="component" value="Chromosome II"/>
</dbReference>
<dbReference type="GO" id="GO:0005737">
    <property type="term" value="C:cytoplasm"/>
    <property type="evidence" value="ECO:0000314"/>
    <property type="project" value="PomBase"/>
</dbReference>
<dbReference type="GO" id="GO:0005829">
    <property type="term" value="C:cytosol"/>
    <property type="evidence" value="ECO:0007005"/>
    <property type="project" value="PomBase"/>
</dbReference>
<dbReference type="GO" id="GO:0005654">
    <property type="term" value="C:nucleoplasm"/>
    <property type="evidence" value="ECO:0000269"/>
    <property type="project" value="PomBase"/>
</dbReference>
<dbReference type="GO" id="GO:0005634">
    <property type="term" value="C:nucleus"/>
    <property type="evidence" value="ECO:0000314"/>
    <property type="project" value="PomBase"/>
</dbReference>
<dbReference type="GO" id="GO:0090575">
    <property type="term" value="C:RNA polymerase II transcription regulator complex"/>
    <property type="evidence" value="ECO:0000353"/>
    <property type="project" value="PomBase"/>
</dbReference>
<dbReference type="GO" id="GO:0034064">
    <property type="term" value="C:Tor2-Mei2-Ste11 complex"/>
    <property type="evidence" value="ECO:0000314"/>
    <property type="project" value="PomBase"/>
</dbReference>
<dbReference type="GO" id="GO:0001228">
    <property type="term" value="F:DNA-binding transcription activator activity, RNA polymerase II-specific"/>
    <property type="evidence" value="ECO:0000314"/>
    <property type="project" value="PomBase"/>
</dbReference>
<dbReference type="GO" id="GO:0000981">
    <property type="term" value="F:DNA-binding transcription factor activity, RNA polymerase II-specific"/>
    <property type="evidence" value="ECO:0000318"/>
    <property type="project" value="GO_Central"/>
</dbReference>
<dbReference type="GO" id="GO:0001227">
    <property type="term" value="F:DNA-binding transcription repressor activity, RNA polymerase II-specific"/>
    <property type="evidence" value="ECO:0000315"/>
    <property type="project" value="PomBase"/>
</dbReference>
<dbReference type="GO" id="GO:0003690">
    <property type="term" value="F:double-stranded DNA binding"/>
    <property type="evidence" value="ECO:0000314"/>
    <property type="project" value="PomBase"/>
</dbReference>
<dbReference type="GO" id="GO:0000978">
    <property type="term" value="F:RNA polymerase II cis-regulatory region sequence-specific DNA binding"/>
    <property type="evidence" value="ECO:0000314"/>
    <property type="project" value="PomBase"/>
</dbReference>
<dbReference type="GO" id="GO:0044377">
    <property type="term" value="F:RNA polymerase II cis-regulatory region sequence-specific DNA binding, bending"/>
    <property type="evidence" value="ECO:0000314"/>
    <property type="project" value="PomBase"/>
</dbReference>
<dbReference type="GO" id="GO:0010514">
    <property type="term" value="P:induction of conjugation with cellular fusion"/>
    <property type="evidence" value="ECO:0000315"/>
    <property type="project" value="PomBase"/>
</dbReference>
<dbReference type="GO" id="GO:1900237">
    <property type="term" value="P:positive regulation of induction of conjugation with cellular fusion"/>
    <property type="evidence" value="ECO:0000315"/>
    <property type="project" value="PomBase"/>
</dbReference>
<dbReference type="GO" id="GO:0045944">
    <property type="term" value="P:positive regulation of transcription by RNA polymerase II"/>
    <property type="evidence" value="ECO:0000315"/>
    <property type="project" value="PomBase"/>
</dbReference>
<dbReference type="GO" id="GO:0006357">
    <property type="term" value="P:regulation of transcription by RNA polymerase II"/>
    <property type="evidence" value="ECO:0000318"/>
    <property type="project" value="GO_Central"/>
</dbReference>
<dbReference type="CDD" id="cd01389">
    <property type="entry name" value="HMG-box_ROX1-like"/>
    <property type="match status" value="1"/>
</dbReference>
<dbReference type="Gene3D" id="1.10.30.10">
    <property type="entry name" value="High mobility group box domain"/>
    <property type="match status" value="1"/>
</dbReference>
<dbReference type="InterPro" id="IPR009071">
    <property type="entry name" value="HMG_box_dom"/>
</dbReference>
<dbReference type="InterPro" id="IPR036910">
    <property type="entry name" value="HMG_box_dom_sf"/>
</dbReference>
<dbReference type="InterPro" id="IPR050917">
    <property type="entry name" value="SOX_TF"/>
</dbReference>
<dbReference type="PANTHER" id="PTHR45803">
    <property type="entry name" value="SOX100B"/>
    <property type="match status" value="1"/>
</dbReference>
<dbReference type="PANTHER" id="PTHR45803:SF5">
    <property type="entry name" value="SOX100B"/>
    <property type="match status" value="1"/>
</dbReference>
<dbReference type="Pfam" id="PF00505">
    <property type="entry name" value="HMG_box"/>
    <property type="match status" value="1"/>
</dbReference>
<dbReference type="SMART" id="SM00398">
    <property type="entry name" value="HMG"/>
    <property type="match status" value="1"/>
</dbReference>
<dbReference type="SUPFAM" id="SSF47095">
    <property type="entry name" value="HMG-box"/>
    <property type="match status" value="1"/>
</dbReference>
<dbReference type="PROSITE" id="PS50118">
    <property type="entry name" value="HMG_BOX_2"/>
    <property type="match status" value="1"/>
</dbReference>
<feature type="chain" id="PRO_0000048579" description="Transcription factor ste11">
    <location>
        <begin position="1"/>
        <end position="468"/>
    </location>
</feature>
<feature type="DNA-binding region" description="HMG box" evidence="1">
    <location>
        <begin position="16"/>
        <end position="80"/>
    </location>
</feature>
<feature type="region of interest" description="Disordered" evidence="2">
    <location>
        <begin position="1"/>
        <end position="21"/>
    </location>
</feature>
<feature type="region of interest" description="Disordered" evidence="2">
    <location>
        <begin position="249"/>
        <end position="290"/>
    </location>
</feature>
<feature type="compositionally biased region" description="Polar residues" evidence="2">
    <location>
        <begin position="249"/>
        <end position="263"/>
    </location>
</feature>
<feature type="compositionally biased region" description="Polar residues" evidence="2">
    <location>
        <begin position="274"/>
        <end position="285"/>
    </location>
</feature>
<feature type="modified residue" description="Phosphothreonine" evidence="3">
    <location>
        <position position="173"/>
    </location>
</feature>
<feature type="modified residue" description="Phosphoserine" evidence="4">
    <location>
        <position position="209"/>
    </location>
</feature>
<feature type="modified residue" description="Phosphoserine" evidence="4">
    <location>
        <position position="211"/>
    </location>
</feature>
<feature type="modified residue" description="Phosphoserine" evidence="3">
    <location>
        <position position="218"/>
    </location>
</feature>
<feature type="mutagenesis site" description="100% activity; nuclear accumulation." evidence="3">
    <original>T</original>
    <variation>A</variation>
    <location>
        <position position="173"/>
    </location>
</feature>
<feature type="mutagenesis site" description="100% activity; nuclear accumulation." evidence="3">
    <original>S</original>
    <variation>A</variation>
    <location>
        <position position="218"/>
    </location>
</feature>
<feature type="sequence conflict" description="In Ref. 1; CAA77507." evidence="5" ref="1">
    <original>R</original>
    <variation>P</variation>
    <location>
        <position position="92"/>
    </location>
</feature>
<feature type="sequence conflict" description="In Ref. 3; BAA87080." evidence="5" ref="3">
    <original>PSSG</original>
    <variation>LLPD</variation>
    <location>
        <begin position="98"/>
        <end position="101"/>
    </location>
</feature>
<comment type="function">
    <text>Key transcription factor for sexual development. Activates the transcription of the matp, matm, mei2, mfm, ste6 and rgs1 genes. Binds specifically to a DNA fragment carrying a 10-base motif 5'-TTCTTTGTTY-3'.</text>
</comment>
<comment type="subcellular location">
    <subcellularLocation>
        <location evidence="1 3">Nucleus</location>
    </subcellularLocation>
    <subcellularLocation>
        <location evidence="3">Cytoplasm</location>
    </subcellularLocation>
    <text>Accumulates in the nucleus under conditions of nitrogen starvation and in the presence of mating pheromones.</text>
</comment>
<comment type="induction">
    <text>By nitrogen starvation.</text>
</comment>
<comment type="PTM">
    <text evidence="3 4">Phosphorylation results in inactivation.</text>
</comment>
<reference key="1">
    <citation type="journal article" date="1991" name="Genes Dev.">
        <title>Schizosaccharomyces pombe ste11+ encodes a transcription factor with an HMG motif that is a critical regulator of sexual development.</title>
        <authorList>
            <person name="Sugimoto A."/>
            <person name="Iino Y."/>
            <person name="Maeda T."/>
            <person name="Watanabe Y."/>
            <person name="Yamamoto M."/>
        </authorList>
    </citation>
    <scope>NUCLEOTIDE SEQUENCE [GENOMIC DNA]</scope>
</reference>
<reference key="2">
    <citation type="journal article" date="2002" name="Nature">
        <title>The genome sequence of Schizosaccharomyces pombe.</title>
        <authorList>
            <person name="Wood V."/>
            <person name="Gwilliam R."/>
            <person name="Rajandream M.A."/>
            <person name="Lyne M.H."/>
            <person name="Lyne R."/>
            <person name="Stewart A."/>
            <person name="Sgouros J.G."/>
            <person name="Peat N."/>
            <person name="Hayles J."/>
            <person name="Baker S.G."/>
            <person name="Basham D."/>
            <person name="Bowman S."/>
            <person name="Brooks K."/>
            <person name="Brown D."/>
            <person name="Brown S."/>
            <person name="Chillingworth T."/>
            <person name="Churcher C.M."/>
            <person name="Collins M."/>
            <person name="Connor R."/>
            <person name="Cronin A."/>
            <person name="Davis P."/>
            <person name="Feltwell T."/>
            <person name="Fraser A."/>
            <person name="Gentles S."/>
            <person name="Goble A."/>
            <person name="Hamlin N."/>
            <person name="Harris D.E."/>
            <person name="Hidalgo J."/>
            <person name="Hodgson G."/>
            <person name="Holroyd S."/>
            <person name="Hornsby T."/>
            <person name="Howarth S."/>
            <person name="Huckle E.J."/>
            <person name="Hunt S."/>
            <person name="Jagels K."/>
            <person name="James K.D."/>
            <person name="Jones L."/>
            <person name="Jones M."/>
            <person name="Leather S."/>
            <person name="McDonald S."/>
            <person name="McLean J."/>
            <person name="Mooney P."/>
            <person name="Moule S."/>
            <person name="Mungall K.L."/>
            <person name="Murphy L.D."/>
            <person name="Niblett D."/>
            <person name="Odell C."/>
            <person name="Oliver K."/>
            <person name="O'Neil S."/>
            <person name="Pearson D."/>
            <person name="Quail M.A."/>
            <person name="Rabbinowitsch E."/>
            <person name="Rutherford K.M."/>
            <person name="Rutter S."/>
            <person name="Saunders D."/>
            <person name="Seeger K."/>
            <person name="Sharp S."/>
            <person name="Skelton J."/>
            <person name="Simmonds M.N."/>
            <person name="Squares R."/>
            <person name="Squares S."/>
            <person name="Stevens K."/>
            <person name="Taylor K."/>
            <person name="Taylor R.G."/>
            <person name="Tivey A."/>
            <person name="Walsh S.V."/>
            <person name="Warren T."/>
            <person name="Whitehead S."/>
            <person name="Woodward J.R."/>
            <person name="Volckaert G."/>
            <person name="Aert R."/>
            <person name="Robben J."/>
            <person name="Grymonprez B."/>
            <person name="Weltjens I."/>
            <person name="Vanstreels E."/>
            <person name="Rieger M."/>
            <person name="Schaefer M."/>
            <person name="Mueller-Auer S."/>
            <person name="Gabel C."/>
            <person name="Fuchs M."/>
            <person name="Duesterhoeft A."/>
            <person name="Fritzc C."/>
            <person name="Holzer E."/>
            <person name="Moestl D."/>
            <person name="Hilbert H."/>
            <person name="Borzym K."/>
            <person name="Langer I."/>
            <person name="Beck A."/>
            <person name="Lehrach H."/>
            <person name="Reinhardt R."/>
            <person name="Pohl T.M."/>
            <person name="Eger P."/>
            <person name="Zimmermann W."/>
            <person name="Wedler H."/>
            <person name="Wambutt R."/>
            <person name="Purnelle B."/>
            <person name="Goffeau A."/>
            <person name="Cadieu E."/>
            <person name="Dreano S."/>
            <person name="Gloux S."/>
            <person name="Lelaure V."/>
            <person name="Mottier S."/>
            <person name="Galibert F."/>
            <person name="Aves S.J."/>
            <person name="Xiang Z."/>
            <person name="Hunt C."/>
            <person name="Moore K."/>
            <person name="Hurst S.M."/>
            <person name="Lucas M."/>
            <person name="Rochet M."/>
            <person name="Gaillardin C."/>
            <person name="Tallada V.A."/>
            <person name="Garzon A."/>
            <person name="Thode G."/>
            <person name="Daga R.R."/>
            <person name="Cruzado L."/>
            <person name="Jimenez J."/>
            <person name="Sanchez M."/>
            <person name="del Rey F."/>
            <person name="Benito J."/>
            <person name="Dominguez A."/>
            <person name="Revuelta J.L."/>
            <person name="Moreno S."/>
            <person name="Armstrong J."/>
            <person name="Forsburg S.L."/>
            <person name="Cerutti L."/>
            <person name="Lowe T."/>
            <person name="McCombie W.R."/>
            <person name="Paulsen I."/>
            <person name="Potashkin J."/>
            <person name="Shpakovski G.V."/>
            <person name="Ussery D."/>
            <person name="Barrell B.G."/>
            <person name="Nurse P."/>
        </authorList>
    </citation>
    <scope>NUCLEOTIDE SEQUENCE [LARGE SCALE GENOMIC DNA]</scope>
    <source>
        <strain>972 / ATCC 24843</strain>
    </source>
</reference>
<reference key="3">
    <citation type="journal article" date="2000" name="Genes Cells">
        <title>Large-scale screening of intracellular protein localization in living fission yeast cells by the use of a GFP-fusion genomic DNA library.</title>
        <authorList>
            <person name="Ding D.-Q."/>
            <person name="Tomita Y."/>
            <person name="Yamamoto A."/>
            <person name="Chikashige Y."/>
            <person name="Haraguchi T."/>
            <person name="Hiraoka Y."/>
        </authorList>
    </citation>
    <scope>NUCLEOTIDE SEQUENCE [LARGE SCALE GENOMIC DNA] OF 1-101</scope>
    <source>
        <strain>ATCC 38364 / 968</strain>
    </source>
</reference>
<reference key="4">
    <citation type="journal article" date="2003" name="Mol. Cell. Biol.">
        <title>Ste11p, a high-mobility-group box DNA-binding protein, undergoes pheromone- and nutrient-regulated nuclear-cytoplasmic shuttling.</title>
        <authorList>
            <person name="Qin J."/>
            <person name="Kang W."/>
            <person name="Leung B."/>
            <person name="McLeod M."/>
        </authorList>
    </citation>
    <scope>SUBCELLULAR LOCATION</scope>
    <scope>PHOSPHORYLATION AT THR-173 AND SER-218</scope>
    <scope>MUTAGENESIS OF THR-173 AND SER-218</scope>
</reference>
<reference key="5">
    <citation type="journal article" date="2008" name="J. Proteome Res.">
        <title>Phosphoproteome analysis of fission yeast.</title>
        <authorList>
            <person name="Wilson-Grady J.T."/>
            <person name="Villen J."/>
            <person name="Gygi S.P."/>
        </authorList>
    </citation>
    <scope>PHOSPHORYLATION [LARGE SCALE ANALYSIS] AT SER-209 AND SER-211</scope>
    <scope>IDENTIFICATION BY MASS SPECTROMETRY</scope>
</reference>
<organism>
    <name type="scientific">Schizosaccharomyces pombe (strain 972 / ATCC 24843)</name>
    <name type="common">Fission yeast</name>
    <dbReference type="NCBI Taxonomy" id="284812"/>
    <lineage>
        <taxon>Eukaryota</taxon>
        <taxon>Fungi</taxon>
        <taxon>Dikarya</taxon>
        <taxon>Ascomycota</taxon>
        <taxon>Taphrinomycotina</taxon>
        <taxon>Schizosaccharomycetes</taxon>
        <taxon>Schizosaccharomycetales</taxon>
        <taxon>Schizosaccharomycetaceae</taxon>
        <taxon>Schizosaccharomyces</taxon>
    </lineage>
</organism>
<gene>
    <name type="primary">ste11</name>
    <name type="synonym">stex</name>
    <name type="ORF">SPBC32C12.02</name>
</gene>
<protein>
    <recommendedName>
        <fullName>Transcription factor ste11</fullName>
    </recommendedName>
</protein>